<comment type="sequence caution" evidence="3">
    <conflict type="erroneous initiation">
        <sequence resource="EMBL-CDS" id="EDR41116"/>
    </conflict>
    <text>Extended N-terminus.</text>
</comment>
<reference evidence="5" key="1">
    <citation type="journal article" date="2005" name="Nature">
        <title>The genome of the social amoeba Dictyostelium discoideum.</title>
        <authorList>
            <person name="Eichinger L."/>
            <person name="Pachebat J.A."/>
            <person name="Gloeckner G."/>
            <person name="Rajandream M.A."/>
            <person name="Sucgang R."/>
            <person name="Berriman M."/>
            <person name="Song J."/>
            <person name="Olsen R."/>
            <person name="Szafranski K."/>
            <person name="Xu Q."/>
            <person name="Tunggal B."/>
            <person name="Kummerfeld S."/>
            <person name="Madera M."/>
            <person name="Konfortov B.A."/>
            <person name="Rivero F."/>
            <person name="Bankier A.T."/>
            <person name="Lehmann R."/>
            <person name="Hamlin N."/>
            <person name="Davies R."/>
            <person name="Gaudet P."/>
            <person name="Fey P."/>
            <person name="Pilcher K."/>
            <person name="Chen G."/>
            <person name="Saunders D."/>
            <person name="Sodergren E.J."/>
            <person name="Davis P."/>
            <person name="Kerhornou A."/>
            <person name="Nie X."/>
            <person name="Hall N."/>
            <person name="Anjard C."/>
            <person name="Hemphill L."/>
            <person name="Bason N."/>
            <person name="Farbrother P."/>
            <person name="Desany B."/>
            <person name="Just E."/>
            <person name="Morio T."/>
            <person name="Rost R."/>
            <person name="Churcher C.M."/>
            <person name="Cooper J."/>
            <person name="Haydock S."/>
            <person name="van Driessche N."/>
            <person name="Cronin A."/>
            <person name="Goodhead I."/>
            <person name="Muzny D.M."/>
            <person name="Mourier T."/>
            <person name="Pain A."/>
            <person name="Lu M."/>
            <person name="Harper D."/>
            <person name="Lindsay R."/>
            <person name="Hauser H."/>
            <person name="James K.D."/>
            <person name="Quiles M."/>
            <person name="Madan Babu M."/>
            <person name="Saito T."/>
            <person name="Buchrieser C."/>
            <person name="Wardroper A."/>
            <person name="Felder M."/>
            <person name="Thangavelu M."/>
            <person name="Johnson D."/>
            <person name="Knights A."/>
            <person name="Loulseged H."/>
            <person name="Mungall K.L."/>
            <person name="Oliver K."/>
            <person name="Price C."/>
            <person name="Quail M.A."/>
            <person name="Urushihara H."/>
            <person name="Hernandez J."/>
            <person name="Rabbinowitsch E."/>
            <person name="Steffen D."/>
            <person name="Sanders M."/>
            <person name="Ma J."/>
            <person name="Kohara Y."/>
            <person name="Sharp S."/>
            <person name="Simmonds M.N."/>
            <person name="Spiegler S."/>
            <person name="Tivey A."/>
            <person name="Sugano S."/>
            <person name="White B."/>
            <person name="Walker D."/>
            <person name="Woodward J.R."/>
            <person name="Winckler T."/>
            <person name="Tanaka Y."/>
            <person name="Shaulsky G."/>
            <person name="Schleicher M."/>
            <person name="Weinstock G.M."/>
            <person name="Rosenthal A."/>
            <person name="Cox E.C."/>
            <person name="Chisholm R.L."/>
            <person name="Gibbs R.A."/>
            <person name="Loomis W.F."/>
            <person name="Platzer M."/>
            <person name="Kay R.R."/>
            <person name="Williams J.G."/>
            <person name="Dear P.H."/>
            <person name="Noegel A.A."/>
            <person name="Barrell B.G."/>
            <person name="Kuspa A."/>
        </authorList>
    </citation>
    <scope>NUCLEOTIDE SEQUENCE [LARGE SCALE GENOMIC DNA]</scope>
    <source>
        <strain evidence="5">AX4</strain>
    </source>
</reference>
<accession>B0G0Z3</accession>
<keyword id="KW-1185">Reference proteome</keyword>
<keyword id="KW-0677">Repeat</keyword>
<keyword id="KW-0853">WD repeat</keyword>
<sequence>MNETNVNNNNQSNEEVEEINDEFKLYYDGLQESKHMKYYTNSFKSYENKQHKRVSSTLVPLKSEDLQSIRINTIHILAWKLNLMAVSYNSKFIFTAESDVINVRNIDNPNIIIKTFAMDTMEMTINQIRLGILDGEEVLVSVDEGGFVRIIFVNDFEREVIRLYNHGVSTWGIAICPSKPLIAVSSNSHKITIWNLDDENPQETKFLLPKHKHNIPSIDFSPCGNYLVSVSIDKNIRIWDVNKRQLLRIQTLAQWCWACRWIDLTTKEDQLYQYYNNSSNSRDNNNNNSNSNNNGGGGIIIDKSWRGLTQHEEQQLVENNQEVEPMPEEEEEEEEEEVNQVDNDDEIFQENDDNEENEENTEFLNEANDGVDDDDDLIIQNGVFTNEDDIIFDGGLPPINQHQQQQQQNQEIEEEGQEGQEEQEDGTENENNQGTIATTTTTTTTIINSIKKLEDAINQQRIENNRINSKVPLDKNKLPSNVVFSTYQNLYLSDVEMDLLLTMNNAIPTSFPIIQTQIDRIAFLEVVPELSLVIAASQGPARLISLYRIVKQIPLNNNINNNENNNNENNDNNLNEPETNMFLESVLSPPSGGPGLIVGLSVVKNYVKNNPLAFSINLYVMYINGIFINFHIKRSTIRNKPIHQNSTFFDPINKCNIFGLDITSFGV</sequence>
<dbReference type="EMBL" id="AAFI02000005">
    <property type="protein sequence ID" value="EDR41116.1"/>
    <property type="status" value="ALT_INIT"/>
    <property type="molecule type" value="Genomic_DNA"/>
</dbReference>
<dbReference type="RefSeq" id="XP_001732958.1">
    <property type="nucleotide sequence ID" value="XM_001732906.1"/>
</dbReference>
<dbReference type="SMR" id="B0G0Z3"/>
<dbReference type="STRING" id="44689.B0G0Z3"/>
<dbReference type="PaxDb" id="44689-DDB0233561"/>
<dbReference type="EnsemblProtists" id="EDR41116">
    <property type="protein sequence ID" value="EDR41116"/>
    <property type="gene ID" value="DDB_G0271002"/>
</dbReference>
<dbReference type="GeneID" id="8617409"/>
<dbReference type="KEGG" id="ddi:DDB_G0271002"/>
<dbReference type="dictyBase" id="DDB_G0271002"/>
<dbReference type="VEuPathDB" id="AmoebaDB:DDB_G0271002"/>
<dbReference type="eggNOG" id="ENOG502S8QA">
    <property type="taxonomic scope" value="Eukaryota"/>
</dbReference>
<dbReference type="HOGENOM" id="CLU_378320_0_0_1"/>
<dbReference type="InParanoid" id="B0G0Z3"/>
<dbReference type="PRO" id="PR:B0G0Z3"/>
<dbReference type="Proteomes" id="UP000002195">
    <property type="component" value="Chromosome 1"/>
</dbReference>
<dbReference type="FunFam" id="2.130.10.10:FF:002622">
    <property type="entry name" value="WD40 repeat-containing protein DDB_G0271002"/>
    <property type="match status" value="1"/>
</dbReference>
<dbReference type="Gene3D" id="2.130.10.10">
    <property type="entry name" value="YVTN repeat-like/Quinoprotein amine dehydrogenase"/>
    <property type="match status" value="1"/>
</dbReference>
<dbReference type="InterPro" id="IPR053019">
    <property type="entry name" value="GATA_zinc_finger"/>
</dbReference>
<dbReference type="InterPro" id="IPR015943">
    <property type="entry name" value="WD40/YVTN_repeat-like_dom_sf"/>
</dbReference>
<dbReference type="InterPro" id="IPR019775">
    <property type="entry name" value="WD40_repeat_CS"/>
</dbReference>
<dbReference type="InterPro" id="IPR036322">
    <property type="entry name" value="WD40_repeat_dom_sf"/>
</dbReference>
<dbReference type="InterPro" id="IPR001680">
    <property type="entry name" value="WD40_rpt"/>
</dbReference>
<dbReference type="PANTHER" id="PTHR23353:SF23">
    <property type="entry name" value="PROTEIN HAIRLESS"/>
    <property type="match status" value="1"/>
</dbReference>
<dbReference type="PANTHER" id="PTHR23353">
    <property type="entry name" value="RAB-GAP/TBC-RELATED"/>
    <property type="match status" value="1"/>
</dbReference>
<dbReference type="Pfam" id="PF00400">
    <property type="entry name" value="WD40"/>
    <property type="match status" value="1"/>
</dbReference>
<dbReference type="SMART" id="SM00320">
    <property type="entry name" value="WD40"/>
    <property type="match status" value="2"/>
</dbReference>
<dbReference type="SUPFAM" id="SSF50978">
    <property type="entry name" value="WD40 repeat-like"/>
    <property type="match status" value="1"/>
</dbReference>
<dbReference type="PROSITE" id="PS00678">
    <property type="entry name" value="WD_REPEATS_1"/>
    <property type="match status" value="1"/>
</dbReference>
<dbReference type="PROSITE" id="PS50082">
    <property type="entry name" value="WD_REPEATS_2"/>
    <property type="match status" value="1"/>
</dbReference>
<dbReference type="PROSITE" id="PS50294">
    <property type="entry name" value="WD_REPEATS_REGION"/>
    <property type="match status" value="1"/>
</dbReference>
<organism evidence="5">
    <name type="scientific">Dictyostelium discoideum</name>
    <name type="common">Social amoeba</name>
    <dbReference type="NCBI Taxonomy" id="44689"/>
    <lineage>
        <taxon>Eukaryota</taxon>
        <taxon>Amoebozoa</taxon>
        <taxon>Evosea</taxon>
        <taxon>Eumycetozoa</taxon>
        <taxon>Dictyostelia</taxon>
        <taxon>Dictyosteliales</taxon>
        <taxon>Dictyosteliaceae</taxon>
        <taxon>Dictyostelium</taxon>
    </lineage>
</organism>
<gene>
    <name evidence="4" type="ORF">DDB_G0271002</name>
</gene>
<proteinExistence type="predicted"/>
<protein>
    <recommendedName>
        <fullName evidence="3">WD40 repeat-containing protein DDB_G0271002</fullName>
    </recommendedName>
</protein>
<name>W1002_DICDI</name>
<evidence type="ECO:0000255" key="1"/>
<evidence type="ECO:0000256" key="2">
    <source>
        <dbReference type="SAM" id="MobiDB-lite"/>
    </source>
</evidence>
<evidence type="ECO:0000305" key="3"/>
<evidence type="ECO:0000312" key="4">
    <source>
        <dbReference type="EMBL" id="EDR41116.1"/>
    </source>
</evidence>
<evidence type="ECO:0000312" key="5">
    <source>
        <dbReference type="Proteomes" id="UP000002195"/>
    </source>
</evidence>
<feature type="chain" id="PRO_0000445764" description="WD40 repeat-containing protein DDB_G0271002">
    <location>
        <begin position="1"/>
        <end position="667"/>
    </location>
</feature>
<feature type="repeat" description="WD 1" evidence="1">
    <location>
        <begin position="165"/>
        <end position="204"/>
    </location>
</feature>
<feature type="repeat" description="WD 2" evidence="1">
    <location>
        <begin position="210"/>
        <end position="249"/>
    </location>
</feature>
<feature type="region of interest" description="Disordered" evidence="2">
    <location>
        <begin position="278"/>
        <end position="301"/>
    </location>
</feature>
<feature type="region of interest" description="Disordered" evidence="2">
    <location>
        <begin position="316"/>
        <end position="345"/>
    </location>
</feature>
<feature type="region of interest" description="Disordered" evidence="2">
    <location>
        <begin position="389"/>
        <end position="440"/>
    </location>
</feature>
<feature type="compositionally biased region" description="Low complexity" evidence="2">
    <location>
        <begin position="278"/>
        <end position="293"/>
    </location>
</feature>
<feature type="compositionally biased region" description="Acidic residues" evidence="2">
    <location>
        <begin position="325"/>
        <end position="345"/>
    </location>
</feature>
<feature type="compositionally biased region" description="Low complexity" evidence="2">
    <location>
        <begin position="400"/>
        <end position="410"/>
    </location>
</feature>
<feature type="compositionally biased region" description="Acidic residues" evidence="2">
    <location>
        <begin position="411"/>
        <end position="428"/>
    </location>
</feature>
<feature type="compositionally biased region" description="Low complexity" evidence="2">
    <location>
        <begin position="429"/>
        <end position="440"/>
    </location>
</feature>